<name>SYA_PYRAR</name>
<keyword id="KW-0030">Aminoacyl-tRNA synthetase</keyword>
<keyword id="KW-0067">ATP-binding</keyword>
<keyword id="KW-0963">Cytoplasm</keyword>
<keyword id="KW-0436">Ligase</keyword>
<keyword id="KW-0479">Metal-binding</keyword>
<keyword id="KW-0547">Nucleotide-binding</keyword>
<keyword id="KW-0648">Protein biosynthesis</keyword>
<keyword id="KW-0694">RNA-binding</keyword>
<keyword id="KW-0820">tRNA-binding</keyword>
<keyword id="KW-0862">Zinc</keyword>
<protein>
    <recommendedName>
        <fullName evidence="1">Alanine--tRNA ligase</fullName>
        <ecNumber evidence="1">6.1.1.7</ecNumber>
    </recommendedName>
    <alternativeName>
        <fullName evidence="1">Alanyl-tRNA synthetase</fullName>
        <shortName evidence="1">AlaRS</shortName>
    </alternativeName>
</protein>
<sequence length="892" mass="99831">MLSAKILERSGYLRKQCPLCKSYFWTLRHDQVYCGDQPCVPYGFIGSPPVKVAVDSLTELRERFLRFFERRGHARIKRYPVVARWRDDVYLVGASIYDFQPWVTSGAVPPPANPLVISQPSIRLTDVDKVGRSGRHLTGFEMMAHHAFNYPDKYVYWIDETTEYAYEFFTKELGITPEEITFKESMWEGGGNAGECYEVLVRGLEVATLVFMHYETKEGKYVELPLKIVDTGYGLERIYWLLKGTPTIYDAVFGPFLDRARQKLGVPEPPAEVMGKASIYFGQMDPEVIGLEKAYDLIAEKIGVDGKWLREVFRPQEALYVLADHSRTVSWMIADGVIPSNSGAGYLARLLIRRILKNLKLAGIEAPLVELIDMHLKELKVDYPEVWAARDLILELVDLEERKYKEILKSAPTVVKKALDEARRRGAASLSPDDLVALYDSFGLPPEIVADVAKTQGVEVKVPDDFYSRLAARHAKKEKQPESTLVEMAKVIDLPRTRELFYEDPYMRSFKAKVLRVVDGKYVVLDQTAFYAEGGGQPGDVGVLKYSGGAAKVVDVQRVGHIIVHVVEGQPPPEGVEVVGEIDWERRYALMKMHTGTHVLIQSIRRVLGPHIWQAGAQKDIPSSRLDVTHYKLPTPEEVAEIERLANSAVQANLPVYVKIMPRNEAEAKYGFILYQGGVVPAREIRVVQIGPDSDPYDVQACGGTHLKSTGEIGIIKIQKVERIADGVVRFIFTTGLHALSYIQELERQLGQAAQVAGGSRDNVVEAVKRLASRAEEAERKWRHYAELYAKQMAQSLKAEQVGRYKLAVVELDDEDLAKKVAEEATGRDKDLVLVVMGGNKLSIFTGGADVAPIVKSLREVGFRGGGSRTFAQGVYSGDVKTLIDALRRALS</sequence>
<dbReference type="EC" id="6.1.1.7" evidence="1"/>
<dbReference type="EMBL" id="CP000660">
    <property type="protein sequence ID" value="ABP51774.1"/>
    <property type="molecule type" value="Genomic_DNA"/>
</dbReference>
<dbReference type="SMR" id="A4WN07"/>
<dbReference type="STRING" id="340102.Pars_2228"/>
<dbReference type="KEGG" id="pas:Pars_2228"/>
<dbReference type="HOGENOM" id="CLU_004485_4_0_2"/>
<dbReference type="OrthoDB" id="7506at2157"/>
<dbReference type="PhylomeDB" id="A4WN07"/>
<dbReference type="Proteomes" id="UP000001567">
    <property type="component" value="Chromosome"/>
</dbReference>
<dbReference type="GO" id="GO:0005737">
    <property type="term" value="C:cytoplasm"/>
    <property type="evidence" value="ECO:0007669"/>
    <property type="project" value="UniProtKB-SubCell"/>
</dbReference>
<dbReference type="GO" id="GO:0004813">
    <property type="term" value="F:alanine-tRNA ligase activity"/>
    <property type="evidence" value="ECO:0007669"/>
    <property type="project" value="UniProtKB-UniRule"/>
</dbReference>
<dbReference type="GO" id="GO:0002161">
    <property type="term" value="F:aminoacyl-tRNA deacylase activity"/>
    <property type="evidence" value="ECO:0007669"/>
    <property type="project" value="TreeGrafter"/>
</dbReference>
<dbReference type="GO" id="GO:0005524">
    <property type="term" value="F:ATP binding"/>
    <property type="evidence" value="ECO:0007669"/>
    <property type="project" value="UniProtKB-UniRule"/>
</dbReference>
<dbReference type="GO" id="GO:0000049">
    <property type="term" value="F:tRNA binding"/>
    <property type="evidence" value="ECO:0007669"/>
    <property type="project" value="UniProtKB-KW"/>
</dbReference>
<dbReference type="GO" id="GO:0008270">
    <property type="term" value="F:zinc ion binding"/>
    <property type="evidence" value="ECO:0007669"/>
    <property type="project" value="UniProtKB-UniRule"/>
</dbReference>
<dbReference type="GO" id="GO:0006419">
    <property type="term" value="P:alanyl-tRNA aminoacylation"/>
    <property type="evidence" value="ECO:0007669"/>
    <property type="project" value="UniProtKB-UniRule"/>
</dbReference>
<dbReference type="CDD" id="cd00673">
    <property type="entry name" value="AlaRS_core"/>
    <property type="match status" value="1"/>
</dbReference>
<dbReference type="FunFam" id="2.40.30.130:FF:000010">
    <property type="entry name" value="Alanine--tRNA ligase"/>
    <property type="match status" value="1"/>
</dbReference>
<dbReference type="FunFam" id="3.30.930.10:FF:000056">
    <property type="entry name" value="Alanine--tRNA ligase"/>
    <property type="match status" value="1"/>
</dbReference>
<dbReference type="FunFam" id="3.30.980.10:FF:000004">
    <property type="entry name" value="Alanine--tRNA ligase, cytoplasmic"/>
    <property type="match status" value="1"/>
</dbReference>
<dbReference type="Gene3D" id="2.40.30.130">
    <property type="match status" value="1"/>
</dbReference>
<dbReference type="Gene3D" id="3.30.930.10">
    <property type="entry name" value="Bira Bifunctional Protein, Domain 2"/>
    <property type="match status" value="1"/>
</dbReference>
<dbReference type="Gene3D" id="3.30.980.10">
    <property type="entry name" value="Threonyl-trna Synthetase, Chain A, domain 2"/>
    <property type="match status" value="1"/>
</dbReference>
<dbReference type="HAMAP" id="MF_00036_A">
    <property type="entry name" value="Ala_tRNA_synth_A"/>
    <property type="match status" value="1"/>
</dbReference>
<dbReference type="InterPro" id="IPR045864">
    <property type="entry name" value="aa-tRNA-synth_II/BPL/LPL"/>
</dbReference>
<dbReference type="InterPro" id="IPR002318">
    <property type="entry name" value="Ala-tRNA-lgiase_IIc"/>
</dbReference>
<dbReference type="InterPro" id="IPR018162">
    <property type="entry name" value="Ala-tRNA-ligase_IIc_anticod-bd"/>
</dbReference>
<dbReference type="InterPro" id="IPR018165">
    <property type="entry name" value="Ala-tRNA-synth_IIc_core"/>
</dbReference>
<dbReference type="InterPro" id="IPR018164">
    <property type="entry name" value="Ala-tRNA-synth_IIc_N"/>
</dbReference>
<dbReference type="InterPro" id="IPR022429">
    <property type="entry name" value="Ala-tRNA_lgiase_arc"/>
</dbReference>
<dbReference type="InterPro" id="IPR050058">
    <property type="entry name" value="Ala-tRNA_ligase"/>
</dbReference>
<dbReference type="InterPro" id="IPR018163">
    <property type="entry name" value="Thr/Ala-tRNA-synth_IIc_edit"/>
</dbReference>
<dbReference type="InterPro" id="IPR009000">
    <property type="entry name" value="Transl_B-barrel_sf"/>
</dbReference>
<dbReference type="InterPro" id="IPR012947">
    <property type="entry name" value="tRNA_SAD"/>
</dbReference>
<dbReference type="NCBIfam" id="TIGR03683">
    <property type="entry name" value="A-tRNA_syn_arch"/>
    <property type="match status" value="1"/>
</dbReference>
<dbReference type="NCBIfam" id="TIGR00344">
    <property type="entry name" value="alaS"/>
    <property type="match status" value="1"/>
</dbReference>
<dbReference type="PANTHER" id="PTHR11777:SF9">
    <property type="entry name" value="ALANINE--TRNA LIGASE, CYTOPLASMIC"/>
    <property type="match status" value="1"/>
</dbReference>
<dbReference type="PANTHER" id="PTHR11777">
    <property type="entry name" value="ALANYL-TRNA SYNTHETASE"/>
    <property type="match status" value="1"/>
</dbReference>
<dbReference type="Pfam" id="PF01411">
    <property type="entry name" value="tRNA-synt_2c"/>
    <property type="match status" value="1"/>
</dbReference>
<dbReference type="Pfam" id="PF07973">
    <property type="entry name" value="tRNA_SAD"/>
    <property type="match status" value="1"/>
</dbReference>
<dbReference type="PRINTS" id="PR00980">
    <property type="entry name" value="TRNASYNTHALA"/>
</dbReference>
<dbReference type="SMART" id="SM00863">
    <property type="entry name" value="tRNA_SAD"/>
    <property type="match status" value="1"/>
</dbReference>
<dbReference type="SUPFAM" id="SSF55681">
    <property type="entry name" value="Class II aaRS and biotin synthetases"/>
    <property type="match status" value="1"/>
</dbReference>
<dbReference type="SUPFAM" id="SSF101353">
    <property type="entry name" value="Putative anticodon-binding domain of alanyl-tRNA synthetase (AlaRS)"/>
    <property type="match status" value="1"/>
</dbReference>
<dbReference type="SUPFAM" id="SSF55186">
    <property type="entry name" value="ThrRS/AlaRS common domain"/>
    <property type="match status" value="1"/>
</dbReference>
<dbReference type="SUPFAM" id="SSF50447">
    <property type="entry name" value="Translation proteins"/>
    <property type="match status" value="1"/>
</dbReference>
<dbReference type="PROSITE" id="PS50860">
    <property type="entry name" value="AA_TRNA_LIGASE_II_ALA"/>
    <property type="match status" value="1"/>
</dbReference>
<organism>
    <name type="scientific">Pyrobaculum arsenaticum (strain DSM 13514 / JCM 11321 / PZ6)</name>
    <dbReference type="NCBI Taxonomy" id="340102"/>
    <lineage>
        <taxon>Archaea</taxon>
        <taxon>Thermoproteota</taxon>
        <taxon>Thermoprotei</taxon>
        <taxon>Thermoproteales</taxon>
        <taxon>Thermoproteaceae</taxon>
        <taxon>Pyrobaculum</taxon>
    </lineage>
</organism>
<proteinExistence type="inferred from homology"/>
<feature type="chain" id="PRO_0000347890" description="Alanine--tRNA ligase">
    <location>
        <begin position="1"/>
        <end position="892"/>
    </location>
</feature>
<feature type="binding site" evidence="1">
    <location>
        <position position="594"/>
    </location>
    <ligand>
        <name>Zn(2+)</name>
        <dbReference type="ChEBI" id="CHEBI:29105"/>
    </ligand>
</feature>
<feature type="binding site" evidence="1">
    <location>
        <position position="598"/>
    </location>
    <ligand>
        <name>Zn(2+)</name>
        <dbReference type="ChEBI" id="CHEBI:29105"/>
    </ligand>
</feature>
<feature type="binding site" evidence="1">
    <location>
        <position position="702"/>
    </location>
    <ligand>
        <name>Zn(2+)</name>
        <dbReference type="ChEBI" id="CHEBI:29105"/>
    </ligand>
</feature>
<feature type="binding site" evidence="1">
    <location>
        <position position="706"/>
    </location>
    <ligand>
        <name>Zn(2+)</name>
        <dbReference type="ChEBI" id="CHEBI:29105"/>
    </ligand>
</feature>
<reference key="1">
    <citation type="submission" date="2007-04" db="EMBL/GenBank/DDBJ databases">
        <title>Complete sequence of Pyrobaculum arsenaticum DSM 13514.</title>
        <authorList>
            <consortium name="US DOE Joint Genome Institute"/>
            <person name="Copeland A."/>
            <person name="Lucas S."/>
            <person name="Lapidus A."/>
            <person name="Barry K."/>
            <person name="Glavina del Rio T."/>
            <person name="Dalin E."/>
            <person name="Tice H."/>
            <person name="Pitluck S."/>
            <person name="Chain P."/>
            <person name="Malfatti S."/>
            <person name="Shin M."/>
            <person name="Vergez L."/>
            <person name="Schmutz J."/>
            <person name="Larimer F."/>
            <person name="Land M."/>
            <person name="Hauser L."/>
            <person name="Kyrpides N."/>
            <person name="Mikhailova N."/>
            <person name="Cozen A.E."/>
            <person name="Fitz-Gibbon S.T."/>
            <person name="House C.H."/>
            <person name="Saltikov C."/>
            <person name="Lowe T.M."/>
            <person name="Richardson P."/>
        </authorList>
    </citation>
    <scope>NUCLEOTIDE SEQUENCE [LARGE SCALE GENOMIC DNA]</scope>
    <source>
        <strain>ATCC 700994 / DSM 13514 / JCM 11321 / PZ6</strain>
    </source>
</reference>
<evidence type="ECO:0000255" key="1">
    <source>
        <dbReference type="HAMAP-Rule" id="MF_00036"/>
    </source>
</evidence>
<accession>A4WN07</accession>
<gene>
    <name evidence="1" type="primary">alaS</name>
    <name type="ordered locus">Pars_2228</name>
</gene>
<comment type="function">
    <text evidence="1">Catalyzes the attachment of alanine to tRNA(Ala) in a two-step reaction: alanine is first activated by ATP to form Ala-AMP and then transferred to the acceptor end of tRNA(Ala). Also edits incorrectly charged Ser-tRNA(Ala) and Gly-tRNA(Ala) via its editing domain.</text>
</comment>
<comment type="catalytic activity">
    <reaction evidence="1">
        <text>tRNA(Ala) + L-alanine + ATP = L-alanyl-tRNA(Ala) + AMP + diphosphate</text>
        <dbReference type="Rhea" id="RHEA:12540"/>
        <dbReference type="Rhea" id="RHEA-COMP:9657"/>
        <dbReference type="Rhea" id="RHEA-COMP:9923"/>
        <dbReference type="ChEBI" id="CHEBI:30616"/>
        <dbReference type="ChEBI" id="CHEBI:33019"/>
        <dbReference type="ChEBI" id="CHEBI:57972"/>
        <dbReference type="ChEBI" id="CHEBI:78442"/>
        <dbReference type="ChEBI" id="CHEBI:78497"/>
        <dbReference type="ChEBI" id="CHEBI:456215"/>
        <dbReference type="EC" id="6.1.1.7"/>
    </reaction>
</comment>
<comment type="cofactor">
    <cofactor evidence="1">
        <name>Zn(2+)</name>
        <dbReference type="ChEBI" id="CHEBI:29105"/>
    </cofactor>
    <text evidence="1">Binds 1 zinc ion per subunit.</text>
</comment>
<comment type="subcellular location">
    <subcellularLocation>
        <location evidence="1">Cytoplasm</location>
    </subcellularLocation>
</comment>
<comment type="domain">
    <text evidence="1">Consists of three domains; the N-terminal catalytic domain, the editing domain and the C-terminal C-Ala domain. The editing domain removes incorrectly charged amino acids, while the C-Ala domain, along with tRNA(Ala), serves as a bridge to cooperatively bring together the editing and aminoacylation centers thus stimulating deacylation of misacylated tRNAs.</text>
</comment>
<comment type="similarity">
    <text evidence="1">Belongs to the class-II aminoacyl-tRNA synthetase family.</text>
</comment>